<keyword id="KW-1015">Disulfide bond</keyword>
<keyword id="KW-0382">Hypotensive agent</keyword>
<keyword id="KW-0964">Secreted</keyword>
<keyword id="KW-0732">Signal</keyword>
<keyword id="KW-0800">Toxin</keyword>
<keyword id="KW-0838">Vasoactive</keyword>
<keyword id="KW-0840">Vasodilator</keyword>
<protein>
    <recommendedName>
        <fullName>Natriuretic peptide Mc-NP</fullName>
    </recommendedName>
    <alternativeName>
        <fullName evidence="6">Micrurus natriuretic peptide</fullName>
        <shortName evidence="6">MNP</shortName>
    </alternativeName>
</protein>
<dbReference type="EMBL" id="U77596">
    <property type="protein sequence ID" value="AAC60341.1"/>
    <property type="molecule type" value="mRNA"/>
</dbReference>
<dbReference type="GO" id="GO:0005576">
    <property type="term" value="C:extracellular region"/>
    <property type="evidence" value="ECO:0007669"/>
    <property type="project" value="UniProtKB-SubCell"/>
</dbReference>
<dbReference type="GO" id="GO:0005179">
    <property type="term" value="F:hormone activity"/>
    <property type="evidence" value="ECO:0007669"/>
    <property type="project" value="InterPro"/>
</dbReference>
<dbReference type="GO" id="GO:0090729">
    <property type="term" value="F:toxin activity"/>
    <property type="evidence" value="ECO:0007669"/>
    <property type="project" value="UniProtKB-KW"/>
</dbReference>
<dbReference type="GO" id="GO:0008217">
    <property type="term" value="P:regulation of blood pressure"/>
    <property type="evidence" value="ECO:0007669"/>
    <property type="project" value="UniProtKB-KW"/>
</dbReference>
<dbReference type="GO" id="GO:0042311">
    <property type="term" value="P:vasodilation"/>
    <property type="evidence" value="ECO:0007669"/>
    <property type="project" value="UniProtKB-KW"/>
</dbReference>
<dbReference type="InterPro" id="IPR002406">
    <property type="entry name" value="C_natriurtcpep"/>
</dbReference>
<dbReference type="InterPro" id="IPR000663">
    <property type="entry name" value="Natr_peptide"/>
</dbReference>
<dbReference type="InterPro" id="IPR030480">
    <property type="entry name" value="Natr_peptide_CS"/>
</dbReference>
<dbReference type="Pfam" id="PF00212">
    <property type="entry name" value="ANP"/>
    <property type="match status" value="1"/>
</dbReference>
<dbReference type="PRINTS" id="PR00713">
    <property type="entry name" value="CNATPEPTIDE"/>
</dbReference>
<dbReference type="SMART" id="SM00183">
    <property type="entry name" value="NAT_PEP"/>
    <property type="match status" value="1"/>
</dbReference>
<dbReference type="PROSITE" id="PS00263">
    <property type="entry name" value="NATRIURETIC_PEPTIDE"/>
    <property type="match status" value="1"/>
</dbReference>
<accession>P79799</accession>
<reference evidence="10" key="1">
    <citation type="journal article" date="1995" name="J. Toxicol. Toxin Rev.">
        <title>Reverse biology applied to Micrurus corallinus, a South American coral snake.</title>
        <authorList>
            <person name="Ho P.L."/>
            <person name="Soares M.B."/>
            <person name="Yamane T."/>
            <person name="Raw I.A."/>
        </authorList>
    </citation>
    <scope>NUCLEOTIDE SEQUENCE [MRNA]</scope>
    <source>
        <tissue>Venom gland</tissue>
    </source>
</reference>
<reference evidence="10" key="2">
    <citation type="journal article" date="1997" name="Eur. J. Biochem.">
        <title>Cloning of an unusual natriuretic peptide from the South American coral snake Micrurus corallinus.</title>
        <authorList>
            <person name="Ho P.L."/>
            <person name="Soares M.B."/>
            <person name="Maack T."/>
            <person name="Gimenez I."/>
            <person name="Puorto G."/>
            <person name="Furtado M.F.D."/>
            <person name="Raw I.A."/>
        </authorList>
    </citation>
    <scope>NUCLEOTIDE SEQUENCE [MRNA]</scope>
    <scope>FUNCTION</scope>
    <scope>TISSUE SPECIFICITY</scope>
    <source>
        <tissue>Venom gland</tissue>
    </source>
</reference>
<organism>
    <name type="scientific">Micrurus corallinus</name>
    <name type="common">Brazilian coral snake</name>
    <dbReference type="NCBI Taxonomy" id="54390"/>
    <lineage>
        <taxon>Eukaryota</taxon>
        <taxon>Metazoa</taxon>
        <taxon>Chordata</taxon>
        <taxon>Craniata</taxon>
        <taxon>Vertebrata</taxon>
        <taxon>Euteleostomi</taxon>
        <taxon>Lepidosauria</taxon>
        <taxon>Squamata</taxon>
        <taxon>Bifurcata</taxon>
        <taxon>Unidentata</taxon>
        <taxon>Episquamata</taxon>
        <taxon>Toxicofera</taxon>
        <taxon>Serpentes</taxon>
        <taxon>Colubroidea</taxon>
        <taxon>Elapidae</taxon>
        <taxon>Elapinae</taxon>
        <taxon>Micrurus</taxon>
    </lineage>
</organism>
<sequence length="139" mass="14881">MVGLSRLRGGGLLLVLALLPLALDGKPLEEAPTAPSRIIPFSRPVRKQSQAVLDPMVHPERPAGSGDDGDSRRLEGLAKEALGDGCFGQRIDRICNVSGMGCNHVRTDPAPTALARIIPFSRPVRKESRAALDRMQQPG</sequence>
<comment type="function">
    <text evidence="1 5">Snake venom natriuretic peptide that dose-dependently induces the rapid relaxation of rat aortic strips phenylephrine-precontracted. Acts by stimulating cGMP production in a dose-dependent manner (by probably activating NPR1 and/or NPR2). May also show potent hypotensive effects (By similarity). A synthetic peptide (AA 77-108, where the Cys-95 is replaced by a Ser) increases sodium excretion and urinary volume in rat kidneys.</text>
</comment>
<comment type="subcellular location">
    <subcellularLocation>
        <location evidence="8 9">Secreted</location>
    </subcellularLocation>
</comment>
<comment type="tissue specificity">
    <text evidence="5">Expressed by the venom gland.</text>
</comment>
<comment type="similarity">
    <text evidence="7">Belongs to the natriuretic peptide family.</text>
</comment>
<feature type="signal peptide" evidence="3">
    <location>
        <begin position="1"/>
        <end position="25"/>
    </location>
</feature>
<feature type="propeptide" id="PRO_0000335923" evidence="7">
    <location>
        <begin position="26"/>
        <end position="75"/>
    </location>
</feature>
<feature type="chain" id="PRO_0000335924" description="Natriuretic peptide Mc-NP" evidence="1">
    <location>
        <begin position="76"/>
        <end position="116"/>
    </location>
</feature>
<feature type="propeptide" id="PRO_0000335925" evidence="7">
    <location>
        <begin position="117"/>
        <end position="139"/>
    </location>
</feature>
<feature type="region of interest" description="Disordered" evidence="4">
    <location>
        <begin position="45"/>
        <end position="72"/>
    </location>
</feature>
<feature type="disulfide bond" evidence="2">
    <location>
        <begin position="86"/>
        <end position="102"/>
    </location>
</feature>
<name>VNP32_MICCO</name>
<proteinExistence type="evidence at transcript level"/>
<evidence type="ECO:0000250" key="1">
    <source>
        <dbReference type="UniProtKB" id="D9IX97"/>
    </source>
</evidence>
<evidence type="ECO:0000250" key="2">
    <source>
        <dbReference type="UniProtKB" id="P28374"/>
    </source>
</evidence>
<evidence type="ECO:0000255" key="3"/>
<evidence type="ECO:0000256" key="4">
    <source>
        <dbReference type="SAM" id="MobiDB-lite"/>
    </source>
</evidence>
<evidence type="ECO:0000269" key="5">
    <source>
    </source>
</evidence>
<evidence type="ECO:0000303" key="6">
    <source>
    </source>
</evidence>
<evidence type="ECO:0000305" key="7"/>
<evidence type="ECO:0000305" key="8">
    <source>
    </source>
</evidence>
<evidence type="ECO:0000305" key="9">
    <source ref="1"/>
</evidence>
<evidence type="ECO:0000312" key="10">
    <source>
        <dbReference type="EMBL" id="AAC60341.1"/>
    </source>
</evidence>